<dbReference type="EC" id="6.1.1.12" evidence="1"/>
<dbReference type="EMBL" id="CP000716">
    <property type="protein sequence ID" value="ABR31464.1"/>
    <property type="molecule type" value="Genomic_DNA"/>
</dbReference>
<dbReference type="RefSeq" id="WP_012057823.1">
    <property type="nucleotide sequence ID" value="NC_009616.1"/>
</dbReference>
<dbReference type="SMR" id="A6LNG3"/>
<dbReference type="STRING" id="391009.Tmel_1620"/>
<dbReference type="KEGG" id="tme:Tmel_1620"/>
<dbReference type="eggNOG" id="COG0173">
    <property type="taxonomic scope" value="Bacteria"/>
</dbReference>
<dbReference type="HOGENOM" id="CLU_014330_3_2_0"/>
<dbReference type="OrthoDB" id="9802326at2"/>
<dbReference type="Proteomes" id="UP000001110">
    <property type="component" value="Chromosome"/>
</dbReference>
<dbReference type="GO" id="GO:0005737">
    <property type="term" value="C:cytoplasm"/>
    <property type="evidence" value="ECO:0007669"/>
    <property type="project" value="UniProtKB-SubCell"/>
</dbReference>
<dbReference type="GO" id="GO:0004815">
    <property type="term" value="F:aspartate-tRNA ligase activity"/>
    <property type="evidence" value="ECO:0007669"/>
    <property type="project" value="UniProtKB-UniRule"/>
</dbReference>
<dbReference type="GO" id="GO:0005524">
    <property type="term" value="F:ATP binding"/>
    <property type="evidence" value="ECO:0007669"/>
    <property type="project" value="UniProtKB-UniRule"/>
</dbReference>
<dbReference type="GO" id="GO:0003676">
    <property type="term" value="F:nucleic acid binding"/>
    <property type="evidence" value="ECO:0007669"/>
    <property type="project" value="InterPro"/>
</dbReference>
<dbReference type="GO" id="GO:0006422">
    <property type="term" value="P:aspartyl-tRNA aminoacylation"/>
    <property type="evidence" value="ECO:0007669"/>
    <property type="project" value="UniProtKB-UniRule"/>
</dbReference>
<dbReference type="CDD" id="cd00777">
    <property type="entry name" value="AspRS_core"/>
    <property type="match status" value="1"/>
</dbReference>
<dbReference type="CDD" id="cd04317">
    <property type="entry name" value="EcAspRS_like_N"/>
    <property type="match status" value="1"/>
</dbReference>
<dbReference type="Gene3D" id="3.30.930.10">
    <property type="entry name" value="Bira Bifunctional Protein, Domain 2"/>
    <property type="match status" value="1"/>
</dbReference>
<dbReference type="Gene3D" id="3.30.1360.30">
    <property type="entry name" value="GAD-like domain"/>
    <property type="match status" value="1"/>
</dbReference>
<dbReference type="Gene3D" id="2.40.50.140">
    <property type="entry name" value="Nucleic acid-binding proteins"/>
    <property type="match status" value="1"/>
</dbReference>
<dbReference type="HAMAP" id="MF_00044">
    <property type="entry name" value="Asp_tRNA_synth_type1"/>
    <property type="match status" value="1"/>
</dbReference>
<dbReference type="InterPro" id="IPR004364">
    <property type="entry name" value="Aa-tRNA-synt_II"/>
</dbReference>
<dbReference type="InterPro" id="IPR006195">
    <property type="entry name" value="aa-tRNA-synth_II"/>
</dbReference>
<dbReference type="InterPro" id="IPR045864">
    <property type="entry name" value="aa-tRNA-synth_II/BPL/LPL"/>
</dbReference>
<dbReference type="InterPro" id="IPR004524">
    <property type="entry name" value="Asp-tRNA-ligase_1"/>
</dbReference>
<dbReference type="InterPro" id="IPR047089">
    <property type="entry name" value="Asp-tRNA-ligase_1_N"/>
</dbReference>
<dbReference type="InterPro" id="IPR002312">
    <property type="entry name" value="Asp/Asn-tRNA-synth_IIb"/>
</dbReference>
<dbReference type="InterPro" id="IPR047090">
    <property type="entry name" value="AspRS_core"/>
</dbReference>
<dbReference type="InterPro" id="IPR004115">
    <property type="entry name" value="GAD-like_sf"/>
</dbReference>
<dbReference type="InterPro" id="IPR029351">
    <property type="entry name" value="GAD_dom"/>
</dbReference>
<dbReference type="InterPro" id="IPR012340">
    <property type="entry name" value="NA-bd_OB-fold"/>
</dbReference>
<dbReference type="InterPro" id="IPR004365">
    <property type="entry name" value="NA-bd_OB_tRNA"/>
</dbReference>
<dbReference type="NCBIfam" id="TIGR00459">
    <property type="entry name" value="aspS_bact"/>
    <property type="match status" value="1"/>
</dbReference>
<dbReference type="NCBIfam" id="NF001750">
    <property type="entry name" value="PRK00476.1"/>
    <property type="match status" value="1"/>
</dbReference>
<dbReference type="PANTHER" id="PTHR22594:SF5">
    <property type="entry name" value="ASPARTATE--TRNA LIGASE, MITOCHONDRIAL"/>
    <property type="match status" value="1"/>
</dbReference>
<dbReference type="PANTHER" id="PTHR22594">
    <property type="entry name" value="ASPARTYL/LYSYL-TRNA SYNTHETASE"/>
    <property type="match status" value="1"/>
</dbReference>
<dbReference type="Pfam" id="PF02938">
    <property type="entry name" value="GAD"/>
    <property type="match status" value="1"/>
</dbReference>
<dbReference type="Pfam" id="PF00152">
    <property type="entry name" value="tRNA-synt_2"/>
    <property type="match status" value="1"/>
</dbReference>
<dbReference type="Pfam" id="PF01336">
    <property type="entry name" value="tRNA_anti-codon"/>
    <property type="match status" value="1"/>
</dbReference>
<dbReference type="PRINTS" id="PR01042">
    <property type="entry name" value="TRNASYNTHASP"/>
</dbReference>
<dbReference type="SUPFAM" id="SSF55681">
    <property type="entry name" value="Class II aaRS and biotin synthetases"/>
    <property type="match status" value="1"/>
</dbReference>
<dbReference type="SUPFAM" id="SSF55261">
    <property type="entry name" value="GAD domain-like"/>
    <property type="match status" value="1"/>
</dbReference>
<dbReference type="SUPFAM" id="SSF50249">
    <property type="entry name" value="Nucleic acid-binding proteins"/>
    <property type="match status" value="1"/>
</dbReference>
<dbReference type="PROSITE" id="PS50862">
    <property type="entry name" value="AA_TRNA_LIGASE_II"/>
    <property type="match status" value="1"/>
</dbReference>
<proteinExistence type="inferred from homology"/>
<protein>
    <recommendedName>
        <fullName evidence="1">Aspartate--tRNA ligase</fullName>
        <ecNumber evidence="1">6.1.1.12</ecNumber>
    </recommendedName>
    <alternativeName>
        <fullName evidence="1">Aspartyl-tRNA synthetase</fullName>
        <shortName evidence="1">AspRS</shortName>
    </alternativeName>
</protein>
<feature type="chain" id="PRO_1000006777" description="Aspartate--tRNA ligase">
    <location>
        <begin position="1"/>
        <end position="581"/>
    </location>
</feature>
<feature type="region of interest" description="Aspartate" evidence="1">
    <location>
        <begin position="194"/>
        <end position="197"/>
    </location>
</feature>
<feature type="binding site" evidence="1">
    <location>
        <position position="170"/>
    </location>
    <ligand>
        <name>L-aspartate</name>
        <dbReference type="ChEBI" id="CHEBI:29991"/>
    </ligand>
</feature>
<feature type="binding site" evidence="1">
    <location>
        <begin position="216"/>
        <end position="218"/>
    </location>
    <ligand>
        <name>ATP</name>
        <dbReference type="ChEBI" id="CHEBI:30616"/>
    </ligand>
</feature>
<feature type="binding site" evidence="1">
    <location>
        <position position="216"/>
    </location>
    <ligand>
        <name>L-aspartate</name>
        <dbReference type="ChEBI" id="CHEBI:29991"/>
    </ligand>
</feature>
<feature type="binding site" evidence="1">
    <location>
        <position position="225"/>
    </location>
    <ligand>
        <name>ATP</name>
        <dbReference type="ChEBI" id="CHEBI:30616"/>
    </ligand>
</feature>
<feature type="binding site" evidence="1">
    <location>
        <position position="439"/>
    </location>
    <ligand>
        <name>L-aspartate</name>
        <dbReference type="ChEBI" id="CHEBI:29991"/>
    </ligand>
</feature>
<feature type="binding site" evidence="1">
    <location>
        <position position="468"/>
    </location>
    <ligand>
        <name>ATP</name>
        <dbReference type="ChEBI" id="CHEBI:30616"/>
    </ligand>
</feature>
<feature type="binding site" evidence="1">
    <location>
        <position position="475"/>
    </location>
    <ligand>
        <name>L-aspartate</name>
        <dbReference type="ChEBI" id="CHEBI:29991"/>
    </ligand>
</feature>
<feature type="binding site" evidence="1">
    <location>
        <begin position="520"/>
        <end position="523"/>
    </location>
    <ligand>
        <name>ATP</name>
        <dbReference type="ChEBI" id="CHEBI:30616"/>
    </ligand>
</feature>
<comment type="function">
    <text evidence="1">Catalyzes the attachment of L-aspartate to tRNA(Asp) in a two-step reaction: L-aspartate is first activated by ATP to form Asp-AMP and then transferred to the acceptor end of tRNA(Asp).</text>
</comment>
<comment type="catalytic activity">
    <reaction evidence="1">
        <text>tRNA(Asp) + L-aspartate + ATP = L-aspartyl-tRNA(Asp) + AMP + diphosphate</text>
        <dbReference type="Rhea" id="RHEA:19649"/>
        <dbReference type="Rhea" id="RHEA-COMP:9660"/>
        <dbReference type="Rhea" id="RHEA-COMP:9678"/>
        <dbReference type="ChEBI" id="CHEBI:29991"/>
        <dbReference type="ChEBI" id="CHEBI:30616"/>
        <dbReference type="ChEBI" id="CHEBI:33019"/>
        <dbReference type="ChEBI" id="CHEBI:78442"/>
        <dbReference type="ChEBI" id="CHEBI:78516"/>
        <dbReference type="ChEBI" id="CHEBI:456215"/>
        <dbReference type="EC" id="6.1.1.12"/>
    </reaction>
</comment>
<comment type="subunit">
    <text evidence="1">Homodimer.</text>
</comment>
<comment type="subcellular location">
    <subcellularLocation>
        <location evidence="1">Cytoplasm</location>
    </subcellularLocation>
</comment>
<comment type="similarity">
    <text evidence="1">Belongs to the class-II aminoacyl-tRNA synthetase family. Type 1 subfamily.</text>
</comment>
<organism>
    <name type="scientific">Thermosipho melanesiensis (strain DSM 12029 / CIP 104789 / BI429)</name>
    <dbReference type="NCBI Taxonomy" id="391009"/>
    <lineage>
        <taxon>Bacteria</taxon>
        <taxon>Thermotogati</taxon>
        <taxon>Thermotogota</taxon>
        <taxon>Thermotogae</taxon>
        <taxon>Thermotogales</taxon>
        <taxon>Fervidobacteriaceae</taxon>
        <taxon>Thermosipho</taxon>
    </lineage>
</organism>
<sequence>MYRTHNCGELRKKDVEKEVILSGWVDRIRDLGGIKFIILRDRYGKTQLVVNPNSPAYEISQELGREWVIQVYGKVLERPDETKTEMVTGEIEVEVNKIKVLSKSDVPPFYPGENVSEDLRLKYRYIDLRDERMQKNLIIRHKMAQAAREFLNKHDFLEVETPYLTKSTPEGARDFLVPSRLQKGKFYALPQSPQLFKQILMVSGFDRYYQFARCFRDEDLRADRQPEFTQIDIEMSFVKMDEILDLMESFARFVFGKVGIKLPEKFDRLSYEEAMELYGSDKPDRRYGMQLQDFTNYFVNTEFKVIKNVLERSGSVKGFITTIPISRKIASQFEEFVKQYGLGGLLWFKLDDEIVSPTAKFLKESYKKIVKEYNLDKGSVVLLAAHENREILNTALGALRLKVGKEYFNELEKVFDALWIVDFPFLEWNEEESRFEARHHPFTMPKNLEQKLEDIKAYAYDMILNGMEIGGGSIRIHDSEVQKRVFEIIGLTEEEANEKFGFFISALKYGVPPHGGIAFGFDRMVSIAANVASIRDVIAFPKTSSGICQLTGAPSTVEEKQLKELSIQIFKGGIENERNES</sequence>
<name>SYD_THEM4</name>
<gene>
    <name evidence="1" type="primary">aspS</name>
    <name type="ordered locus">Tmel_1620</name>
</gene>
<accession>A6LNG3</accession>
<reference key="1">
    <citation type="submission" date="2007-05" db="EMBL/GenBank/DDBJ databases">
        <title>Complete sequence of Thermosipho melanesiensis BI429.</title>
        <authorList>
            <consortium name="US DOE Joint Genome Institute"/>
            <person name="Copeland A."/>
            <person name="Lucas S."/>
            <person name="Lapidus A."/>
            <person name="Barry K."/>
            <person name="Glavina del Rio T."/>
            <person name="Dalin E."/>
            <person name="Tice H."/>
            <person name="Pitluck S."/>
            <person name="Chertkov O."/>
            <person name="Brettin T."/>
            <person name="Bruce D."/>
            <person name="Detter J.C."/>
            <person name="Han C."/>
            <person name="Schmutz J."/>
            <person name="Larimer F."/>
            <person name="Land M."/>
            <person name="Hauser L."/>
            <person name="Kyrpides N."/>
            <person name="Mikhailova N."/>
            <person name="Nelson K."/>
            <person name="Gogarten J.P."/>
            <person name="Noll K."/>
            <person name="Richardson P."/>
        </authorList>
    </citation>
    <scope>NUCLEOTIDE SEQUENCE [LARGE SCALE GENOMIC DNA]</scope>
    <source>
        <strain>DSM 12029 / CIP 104789 / BI429</strain>
    </source>
</reference>
<evidence type="ECO:0000255" key="1">
    <source>
        <dbReference type="HAMAP-Rule" id="MF_00044"/>
    </source>
</evidence>
<keyword id="KW-0030">Aminoacyl-tRNA synthetase</keyword>
<keyword id="KW-0067">ATP-binding</keyword>
<keyword id="KW-0963">Cytoplasm</keyword>
<keyword id="KW-0436">Ligase</keyword>
<keyword id="KW-0547">Nucleotide-binding</keyword>
<keyword id="KW-0648">Protein biosynthesis</keyword>